<proteinExistence type="inferred from homology"/>
<comment type="function">
    <text evidence="1">Catalyzes the transfer of the diacylglyceryl group from phosphatidylglycerol to the sulfhydryl group of the N-terminal cysteine of a prolipoprotein, the first step in the formation of mature lipoproteins.</text>
</comment>
<comment type="catalytic activity">
    <reaction evidence="1">
        <text>L-cysteinyl-[prolipoprotein] + a 1,2-diacyl-sn-glycero-3-phospho-(1'-sn-glycerol) = an S-1,2-diacyl-sn-glyceryl-L-cysteinyl-[prolipoprotein] + sn-glycerol 1-phosphate + H(+)</text>
        <dbReference type="Rhea" id="RHEA:56712"/>
        <dbReference type="Rhea" id="RHEA-COMP:14679"/>
        <dbReference type="Rhea" id="RHEA-COMP:14680"/>
        <dbReference type="ChEBI" id="CHEBI:15378"/>
        <dbReference type="ChEBI" id="CHEBI:29950"/>
        <dbReference type="ChEBI" id="CHEBI:57685"/>
        <dbReference type="ChEBI" id="CHEBI:64716"/>
        <dbReference type="ChEBI" id="CHEBI:140658"/>
        <dbReference type="EC" id="2.5.1.145"/>
    </reaction>
</comment>
<comment type="pathway">
    <text evidence="1">Protein modification; lipoprotein biosynthesis (diacylglyceryl transfer).</text>
</comment>
<comment type="subcellular location">
    <subcellularLocation>
        <location evidence="1">Cell inner membrane</location>
        <topology evidence="1">Multi-pass membrane protein</topology>
    </subcellularLocation>
</comment>
<comment type="similarity">
    <text evidence="1">Belongs to the Lgt family.</text>
</comment>
<gene>
    <name evidence="1" type="primary">lgt</name>
    <name type="ordered locus">Shewana3_3040</name>
</gene>
<feature type="chain" id="PRO_1000073057" description="Phosphatidylglycerol--prolipoprotein diacylglyceryl transferase">
    <location>
        <begin position="1"/>
        <end position="268"/>
    </location>
</feature>
<feature type="transmembrane region" description="Helical" evidence="1">
    <location>
        <begin position="27"/>
        <end position="47"/>
    </location>
</feature>
<feature type="transmembrane region" description="Helical" evidence="1">
    <location>
        <begin position="66"/>
        <end position="86"/>
    </location>
</feature>
<feature type="transmembrane region" description="Helical" evidence="1">
    <location>
        <begin position="104"/>
        <end position="124"/>
    </location>
</feature>
<feature type="transmembrane region" description="Helical" evidence="1">
    <location>
        <begin position="130"/>
        <end position="150"/>
    </location>
</feature>
<feature type="transmembrane region" description="Helical" evidence="1">
    <location>
        <begin position="181"/>
        <end position="201"/>
    </location>
</feature>
<feature type="transmembrane region" description="Helical" evidence="1">
    <location>
        <begin position="208"/>
        <end position="228"/>
    </location>
</feature>
<feature type="transmembrane region" description="Helical" evidence="1">
    <location>
        <begin position="242"/>
        <end position="262"/>
    </location>
</feature>
<feature type="binding site" evidence="1">
    <location>
        <position position="149"/>
    </location>
    <ligand>
        <name>a 1,2-diacyl-sn-glycero-3-phospho-(1'-sn-glycerol)</name>
        <dbReference type="ChEBI" id="CHEBI:64716"/>
    </ligand>
</feature>
<organism>
    <name type="scientific">Shewanella sp. (strain ANA-3)</name>
    <dbReference type="NCBI Taxonomy" id="94122"/>
    <lineage>
        <taxon>Bacteria</taxon>
        <taxon>Pseudomonadati</taxon>
        <taxon>Pseudomonadota</taxon>
        <taxon>Gammaproteobacteria</taxon>
        <taxon>Alteromonadales</taxon>
        <taxon>Shewanellaceae</taxon>
        <taxon>Shewanella</taxon>
    </lineage>
</organism>
<protein>
    <recommendedName>
        <fullName evidence="1">Phosphatidylglycerol--prolipoprotein diacylglyceryl transferase</fullName>
        <ecNumber evidence="1">2.5.1.145</ecNumber>
    </recommendedName>
</protein>
<name>LGT_SHESA</name>
<dbReference type="EC" id="2.5.1.145" evidence="1"/>
<dbReference type="EMBL" id="CP000469">
    <property type="protein sequence ID" value="ABK49265.1"/>
    <property type="molecule type" value="Genomic_DNA"/>
</dbReference>
<dbReference type="RefSeq" id="WP_011717885.1">
    <property type="nucleotide sequence ID" value="NC_008577.1"/>
</dbReference>
<dbReference type="SMR" id="A0KZP6"/>
<dbReference type="STRING" id="94122.Shewana3_3040"/>
<dbReference type="GeneID" id="94728962"/>
<dbReference type="KEGG" id="shn:Shewana3_3040"/>
<dbReference type="eggNOG" id="COG0682">
    <property type="taxonomic scope" value="Bacteria"/>
</dbReference>
<dbReference type="HOGENOM" id="CLU_013386_1_0_6"/>
<dbReference type="OrthoDB" id="871140at2"/>
<dbReference type="UniPathway" id="UPA00664"/>
<dbReference type="Proteomes" id="UP000002589">
    <property type="component" value="Chromosome"/>
</dbReference>
<dbReference type="GO" id="GO:0005886">
    <property type="term" value="C:plasma membrane"/>
    <property type="evidence" value="ECO:0007669"/>
    <property type="project" value="UniProtKB-SubCell"/>
</dbReference>
<dbReference type="GO" id="GO:0008961">
    <property type="term" value="F:phosphatidylglycerol-prolipoprotein diacylglyceryl transferase activity"/>
    <property type="evidence" value="ECO:0007669"/>
    <property type="project" value="UniProtKB-UniRule"/>
</dbReference>
<dbReference type="GO" id="GO:0042158">
    <property type="term" value="P:lipoprotein biosynthetic process"/>
    <property type="evidence" value="ECO:0007669"/>
    <property type="project" value="UniProtKB-UniRule"/>
</dbReference>
<dbReference type="HAMAP" id="MF_01147">
    <property type="entry name" value="Lgt"/>
    <property type="match status" value="1"/>
</dbReference>
<dbReference type="InterPro" id="IPR001640">
    <property type="entry name" value="Lgt"/>
</dbReference>
<dbReference type="NCBIfam" id="TIGR00544">
    <property type="entry name" value="lgt"/>
    <property type="match status" value="1"/>
</dbReference>
<dbReference type="PANTHER" id="PTHR30589:SF0">
    <property type="entry name" value="PHOSPHATIDYLGLYCEROL--PROLIPOPROTEIN DIACYLGLYCERYL TRANSFERASE"/>
    <property type="match status" value="1"/>
</dbReference>
<dbReference type="PANTHER" id="PTHR30589">
    <property type="entry name" value="PROLIPOPROTEIN DIACYLGLYCERYL TRANSFERASE"/>
    <property type="match status" value="1"/>
</dbReference>
<dbReference type="Pfam" id="PF01790">
    <property type="entry name" value="LGT"/>
    <property type="match status" value="1"/>
</dbReference>
<dbReference type="PROSITE" id="PS01311">
    <property type="entry name" value="LGT"/>
    <property type="match status" value="1"/>
</dbReference>
<accession>A0KZP6</accession>
<reference key="1">
    <citation type="submission" date="2006-09" db="EMBL/GenBank/DDBJ databases">
        <title>Complete sequence of chromosome 1 of Shewanella sp. ANA-3.</title>
        <authorList>
            <person name="Copeland A."/>
            <person name="Lucas S."/>
            <person name="Lapidus A."/>
            <person name="Barry K."/>
            <person name="Detter J.C."/>
            <person name="Glavina del Rio T."/>
            <person name="Hammon N."/>
            <person name="Israni S."/>
            <person name="Dalin E."/>
            <person name="Tice H."/>
            <person name="Pitluck S."/>
            <person name="Chertkov O."/>
            <person name="Brettin T."/>
            <person name="Bruce D."/>
            <person name="Han C."/>
            <person name="Tapia R."/>
            <person name="Gilna P."/>
            <person name="Schmutz J."/>
            <person name="Larimer F."/>
            <person name="Land M."/>
            <person name="Hauser L."/>
            <person name="Kyrpides N."/>
            <person name="Kim E."/>
            <person name="Newman D."/>
            <person name="Salticov C."/>
            <person name="Konstantinidis K."/>
            <person name="Klappenback J."/>
            <person name="Tiedje J."/>
            <person name="Richardson P."/>
        </authorList>
    </citation>
    <scope>NUCLEOTIDE SEQUENCE [LARGE SCALE GENOMIC DNA]</scope>
    <source>
        <strain>ANA-3</strain>
    </source>
</reference>
<keyword id="KW-0997">Cell inner membrane</keyword>
<keyword id="KW-1003">Cell membrane</keyword>
<keyword id="KW-0472">Membrane</keyword>
<keyword id="KW-0808">Transferase</keyword>
<keyword id="KW-0812">Transmembrane</keyword>
<keyword id="KW-1133">Transmembrane helix</keyword>
<sequence>MALNFPNIDPVIVKFGPFDIFGQTFEPALRWYGFTYLVGFVAAMWLLNRQADRSNGLWSREQVSDLLFYGFLGVILGGRIGYVLFYHFDYFLASPMYLFKISEGGMSFHGGLMGVITAMIYIAWKQKRTFFAVADMVAPVVPIGLGAGRIGNFINGELWGRVTDVPWAMVFPSGGPEPRHPSQLYQFALEGVALFLLLYWFSKRTKKVGAVSGMFLLGYGIFRVIVETVRQPDAQLGLYWGFMTMGQILSVPMILFGLYLILRPEGKQ</sequence>
<evidence type="ECO:0000255" key="1">
    <source>
        <dbReference type="HAMAP-Rule" id="MF_01147"/>
    </source>
</evidence>